<reference key="1">
    <citation type="submission" date="2006-05" db="EMBL/GenBank/DDBJ databases">
        <authorList>
            <consortium name="Genoscope"/>
        </authorList>
    </citation>
    <scope>NUCLEOTIDE SEQUENCE [LARGE SCALE GENOMIC DNA]</scope>
    <source>
        <strain>WH7803</strain>
    </source>
</reference>
<name>RECA_SYNPW</name>
<organism>
    <name type="scientific">Synechococcus sp. (strain WH7803)</name>
    <dbReference type="NCBI Taxonomy" id="32051"/>
    <lineage>
        <taxon>Bacteria</taxon>
        <taxon>Bacillati</taxon>
        <taxon>Cyanobacteriota</taxon>
        <taxon>Cyanophyceae</taxon>
        <taxon>Synechococcales</taxon>
        <taxon>Synechococcaceae</taxon>
        <taxon>Synechococcus</taxon>
    </lineage>
</organism>
<protein>
    <recommendedName>
        <fullName evidence="1">Protein RecA</fullName>
    </recommendedName>
    <alternativeName>
        <fullName evidence="1">Recombinase A</fullName>
    </alternativeName>
</protein>
<evidence type="ECO:0000255" key="1">
    <source>
        <dbReference type="HAMAP-Rule" id="MF_00268"/>
    </source>
</evidence>
<evidence type="ECO:0000256" key="2">
    <source>
        <dbReference type="SAM" id="MobiDB-lite"/>
    </source>
</evidence>
<comment type="function">
    <text evidence="1">Can catalyze the hydrolysis of ATP in the presence of single-stranded DNA, the ATP-dependent uptake of single-stranded DNA by duplex DNA, and the ATP-dependent hybridization of homologous single-stranded DNAs. It interacts with LexA causing its activation and leading to its autocatalytic cleavage.</text>
</comment>
<comment type="subcellular location">
    <subcellularLocation>
        <location evidence="1">Cytoplasm</location>
    </subcellularLocation>
</comment>
<comment type="similarity">
    <text evidence="1">Belongs to the RecA family.</text>
</comment>
<keyword id="KW-0067">ATP-binding</keyword>
<keyword id="KW-0963">Cytoplasm</keyword>
<keyword id="KW-0227">DNA damage</keyword>
<keyword id="KW-0233">DNA recombination</keyword>
<keyword id="KW-0234">DNA repair</keyword>
<keyword id="KW-0238">DNA-binding</keyword>
<keyword id="KW-0547">Nucleotide-binding</keyword>
<keyword id="KW-1185">Reference proteome</keyword>
<keyword id="KW-0742">SOS response</keyword>
<accession>A5GIV0</accession>
<proteinExistence type="inferred from homology"/>
<sequence>MPVEVKSSQSSGGDVRPGERDQALNLVLGQIERNFGKGSIMRLGDASRMRVETISTGALTLDLALGGGYPKGRVVEVYGPESSGKTTLTLHAIAEVQRRGGVAAFVDAEHALDPVYAASLGVDIENLLVSQPDTGEMALEIVDQLVRSAAVDIVVVDSVAALTPRAEIEGEMGDLAVGSQARLMSQAMRKITGNIGKSGCTVIFLNQLRLKIGVTYGNPETTTGGNALKFYASVRLDIRRIQTLKRGTEEYGIRAKVKVAKNKVAPPFRIAEFDILFGRGISTLGCLLDLAEETGVVTRKGAWYSYEGDNIGQGRDNTIGWLEQNPEAKDTIETLVRQKLTEGSEVTSNSMRPLAAAARSAATKSAAKGSEVQADVKTKGAA</sequence>
<dbReference type="EMBL" id="CT971583">
    <property type="protein sequence ID" value="CAK22865.1"/>
    <property type="molecule type" value="Genomic_DNA"/>
</dbReference>
<dbReference type="SMR" id="A5GIV0"/>
<dbReference type="STRING" id="32051.SynWH7803_0439"/>
<dbReference type="KEGG" id="syx:SynWH7803_0439"/>
<dbReference type="eggNOG" id="COG0468">
    <property type="taxonomic scope" value="Bacteria"/>
</dbReference>
<dbReference type="HOGENOM" id="CLU_040469_3_2_3"/>
<dbReference type="OrthoDB" id="9776733at2"/>
<dbReference type="Proteomes" id="UP000001566">
    <property type="component" value="Chromosome"/>
</dbReference>
<dbReference type="GO" id="GO:0005829">
    <property type="term" value="C:cytosol"/>
    <property type="evidence" value="ECO:0007669"/>
    <property type="project" value="TreeGrafter"/>
</dbReference>
<dbReference type="GO" id="GO:0005524">
    <property type="term" value="F:ATP binding"/>
    <property type="evidence" value="ECO:0007669"/>
    <property type="project" value="UniProtKB-UniRule"/>
</dbReference>
<dbReference type="GO" id="GO:0016887">
    <property type="term" value="F:ATP hydrolysis activity"/>
    <property type="evidence" value="ECO:0007669"/>
    <property type="project" value="InterPro"/>
</dbReference>
<dbReference type="GO" id="GO:0140664">
    <property type="term" value="F:ATP-dependent DNA damage sensor activity"/>
    <property type="evidence" value="ECO:0007669"/>
    <property type="project" value="InterPro"/>
</dbReference>
<dbReference type="GO" id="GO:0003684">
    <property type="term" value="F:damaged DNA binding"/>
    <property type="evidence" value="ECO:0007669"/>
    <property type="project" value="UniProtKB-UniRule"/>
</dbReference>
<dbReference type="GO" id="GO:0003697">
    <property type="term" value="F:single-stranded DNA binding"/>
    <property type="evidence" value="ECO:0007669"/>
    <property type="project" value="UniProtKB-UniRule"/>
</dbReference>
<dbReference type="GO" id="GO:0006310">
    <property type="term" value="P:DNA recombination"/>
    <property type="evidence" value="ECO:0007669"/>
    <property type="project" value="UniProtKB-UniRule"/>
</dbReference>
<dbReference type="GO" id="GO:0006281">
    <property type="term" value="P:DNA repair"/>
    <property type="evidence" value="ECO:0007669"/>
    <property type="project" value="UniProtKB-UniRule"/>
</dbReference>
<dbReference type="GO" id="GO:0009432">
    <property type="term" value="P:SOS response"/>
    <property type="evidence" value="ECO:0007669"/>
    <property type="project" value="UniProtKB-UniRule"/>
</dbReference>
<dbReference type="CDD" id="cd00983">
    <property type="entry name" value="RecA"/>
    <property type="match status" value="1"/>
</dbReference>
<dbReference type="FunFam" id="3.40.50.300:FF:000087">
    <property type="entry name" value="Recombinase RecA"/>
    <property type="match status" value="1"/>
</dbReference>
<dbReference type="Gene3D" id="3.40.50.300">
    <property type="entry name" value="P-loop containing nucleotide triphosphate hydrolases"/>
    <property type="match status" value="1"/>
</dbReference>
<dbReference type="HAMAP" id="MF_00268">
    <property type="entry name" value="RecA"/>
    <property type="match status" value="1"/>
</dbReference>
<dbReference type="InterPro" id="IPR003593">
    <property type="entry name" value="AAA+_ATPase"/>
</dbReference>
<dbReference type="InterPro" id="IPR013765">
    <property type="entry name" value="DNA_recomb/repair_RecA"/>
</dbReference>
<dbReference type="InterPro" id="IPR020584">
    <property type="entry name" value="DNA_recomb/repair_RecA_CS"/>
</dbReference>
<dbReference type="InterPro" id="IPR027417">
    <property type="entry name" value="P-loop_NTPase"/>
</dbReference>
<dbReference type="InterPro" id="IPR049261">
    <property type="entry name" value="RecA-like_C"/>
</dbReference>
<dbReference type="InterPro" id="IPR049428">
    <property type="entry name" value="RecA-like_N"/>
</dbReference>
<dbReference type="InterPro" id="IPR023400">
    <property type="entry name" value="RecA_C_sf"/>
</dbReference>
<dbReference type="NCBIfam" id="TIGR02012">
    <property type="entry name" value="tigrfam_recA"/>
    <property type="match status" value="1"/>
</dbReference>
<dbReference type="PANTHER" id="PTHR45900:SF1">
    <property type="entry name" value="MITOCHONDRIAL DNA REPAIR PROTEIN RECA HOMOLOG-RELATED"/>
    <property type="match status" value="1"/>
</dbReference>
<dbReference type="PANTHER" id="PTHR45900">
    <property type="entry name" value="RECA"/>
    <property type="match status" value="1"/>
</dbReference>
<dbReference type="Pfam" id="PF00154">
    <property type="entry name" value="RecA"/>
    <property type="match status" value="1"/>
</dbReference>
<dbReference type="Pfam" id="PF21096">
    <property type="entry name" value="RecA_C"/>
    <property type="match status" value="1"/>
</dbReference>
<dbReference type="PRINTS" id="PR00142">
    <property type="entry name" value="RECA"/>
</dbReference>
<dbReference type="SMART" id="SM00382">
    <property type="entry name" value="AAA"/>
    <property type="match status" value="1"/>
</dbReference>
<dbReference type="SUPFAM" id="SSF52540">
    <property type="entry name" value="P-loop containing nucleoside triphosphate hydrolases"/>
    <property type="match status" value="1"/>
</dbReference>
<dbReference type="SUPFAM" id="SSF54752">
    <property type="entry name" value="RecA protein, C-terminal domain"/>
    <property type="match status" value="1"/>
</dbReference>
<dbReference type="PROSITE" id="PS00321">
    <property type="entry name" value="RECA_1"/>
    <property type="match status" value="1"/>
</dbReference>
<dbReference type="PROSITE" id="PS50162">
    <property type="entry name" value="RECA_2"/>
    <property type="match status" value="1"/>
</dbReference>
<dbReference type="PROSITE" id="PS50163">
    <property type="entry name" value="RECA_3"/>
    <property type="match status" value="1"/>
</dbReference>
<gene>
    <name evidence="1" type="primary">recA</name>
    <name type="ordered locus">SynWH7803_0439</name>
</gene>
<feature type="chain" id="PRO_1000048023" description="Protein RecA">
    <location>
        <begin position="1"/>
        <end position="382"/>
    </location>
</feature>
<feature type="region of interest" description="Disordered" evidence="2">
    <location>
        <begin position="362"/>
        <end position="382"/>
    </location>
</feature>
<feature type="binding site" evidence="1">
    <location>
        <begin position="79"/>
        <end position="86"/>
    </location>
    <ligand>
        <name>ATP</name>
        <dbReference type="ChEBI" id="CHEBI:30616"/>
    </ligand>
</feature>